<feature type="chain" id="PRO_0000308130" description="Large ribosomal subunit protein uL1">
    <location>
        <begin position="1"/>
        <end position="235"/>
    </location>
</feature>
<proteinExistence type="inferred from homology"/>
<organism>
    <name type="scientific">Synechococcus sp. (strain RCC307)</name>
    <dbReference type="NCBI Taxonomy" id="316278"/>
    <lineage>
        <taxon>Bacteria</taxon>
        <taxon>Bacillati</taxon>
        <taxon>Cyanobacteriota</taxon>
        <taxon>Cyanophyceae</taxon>
        <taxon>Synechococcales</taxon>
        <taxon>Synechococcaceae</taxon>
        <taxon>Synechococcus</taxon>
    </lineage>
</organism>
<dbReference type="EMBL" id="CT978603">
    <property type="protein sequence ID" value="CAK29260.1"/>
    <property type="molecule type" value="Genomic_DNA"/>
</dbReference>
<dbReference type="SMR" id="A5GWK1"/>
<dbReference type="STRING" id="316278.SynRCC307_2357"/>
<dbReference type="KEGG" id="syr:SynRCC307_2357"/>
<dbReference type="eggNOG" id="COG0081">
    <property type="taxonomic scope" value="Bacteria"/>
</dbReference>
<dbReference type="HOGENOM" id="CLU_062853_0_0_3"/>
<dbReference type="OrthoDB" id="9803740at2"/>
<dbReference type="Proteomes" id="UP000001115">
    <property type="component" value="Chromosome"/>
</dbReference>
<dbReference type="GO" id="GO:0015934">
    <property type="term" value="C:large ribosomal subunit"/>
    <property type="evidence" value="ECO:0007669"/>
    <property type="project" value="InterPro"/>
</dbReference>
<dbReference type="GO" id="GO:0019843">
    <property type="term" value="F:rRNA binding"/>
    <property type="evidence" value="ECO:0007669"/>
    <property type="project" value="UniProtKB-UniRule"/>
</dbReference>
<dbReference type="GO" id="GO:0003735">
    <property type="term" value="F:structural constituent of ribosome"/>
    <property type="evidence" value="ECO:0007669"/>
    <property type="project" value="InterPro"/>
</dbReference>
<dbReference type="GO" id="GO:0000049">
    <property type="term" value="F:tRNA binding"/>
    <property type="evidence" value="ECO:0007669"/>
    <property type="project" value="UniProtKB-KW"/>
</dbReference>
<dbReference type="GO" id="GO:0006417">
    <property type="term" value="P:regulation of translation"/>
    <property type="evidence" value="ECO:0007669"/>
    <property type="project" value="UniProtKB-KW"/>
</dbReference>
<dbReference type="GO" id="GO:0006412">
    <property type="term" value="P:translation"/>
    <property type="evidence" value="ECO:0007669"/>
    <property type="project" value="UniProtKB-UniRule"/>
</dbReference>
<dbReference type="CDD" id="cd00403">
    <property type="entry name" value="Ribosomal_L1"/>
    <property type="match status" value="1"/>
</dbReference>
<dbReference type="FunFam" id="3.40.50.790:FF:000001">
    <property type="entry name" value="50S ribosomal protein L1"/>
    <property type="match status" value="1"/>
</dbReference>
<dbReference type="Gene3D" id="3.30.190.20">
    <property type="match status" value="1"/>
</dbReference>
<dbReference type="Gene3D" id="3.40.50.790">
    <property type="match status" value="1"/>
</dbReference>
<dbReference type="HAMAP" id="MF_01318_B">
    <property type="entry name" value="Ribosomal_uL1_B"/>
    <property type="match status" value="1"/>
</dbReference>
<dbReference type="InterPro" id="IPR005878">
    <property type="entry name" value="Ribosom_uL1_bac-type"/>
</dbReference>
<dbReference type="InterPro" id="IPR002143">
    <property type="entry name" value="Ribosomal_uL1"/>
</dbReference>
<dbReference type="InterPro" id="IPR023674">
    <property type="entry name" value="Ribosomal_uL1-like"/>
</dbReference>
<dbReference type="InterPro" id="IPR028364">
    <property type="entry name" value="Ribosomal_uL1/biogenesis"/>
</dbReference>
<dbReference type="InterPro" id="IPR016095">
    <property type="entry name" value="Ribosomal_uL1_3-a/b-sand"/>
</dbReference>
<dbReference type="InterPro" id="IPR023673">
    <property type="entry name" value="Ribosomal_uL1_CS"/>
</dbReference>
<dbReference type="NCBIfam" id="TIGR01169">
    <property type="entry name" value="rplA_bact"/>
    <property type="match status" value="1"/>
</dbReference>
<dbReference type="PANTHER" id="PTHR36427">
    <property type="entry name" value="54S RIBOSOMAL PROTEIN L1, MITOCHONDRIAL"/>
    <property type="match status" value="1"/>
</dbReference>
<dbReference type="PANTHER" id="PTHR36427:SF3">
    <property type="entry name" value="LARGE RIBOSOMAL SUBUNIT PROTEIN UL1M"/>
    <property type="match status" value="1"/>
</dbReference>
<dbReference type="Pfam" id="PF00687">
    <property type="entry name" value="Ribosomal_L1"/>
    <property type="match status" value="1"/>
</dbReference>
<dbReference type="PIRSF" id="PIRSF002155">
    <property type="entry name" value="Ribosomal_L1"/>
    <property type="match status" value="1"/>
</dbReference>
<dbReference type="SUPFAM" id="SSF56808">
    <property type="entry name" value="Ribosomal protein L1"/>
    <property type="match status" value="1"/>
</dbReference>
<dbReference type="PROSITE" id="PS01199">
    <property type="entry name" value="RIBOSOMAL_L1"/>
    <property type="match status" value="1"/>
</dbReference>
<keyword id="KW-1185">Reference proteome</keyword>
<keyword id="KW-0678">Repressor</keyword>
<keyword id="KW-0687">Ribonucleoprotein</keyword>
<keyword id="KW-0689">Ribosomal protein</keyword>
<keyword id="KW-0694">RNA-binding</keyword>
<keyword id="KW-0699">rRNA-binding</keyword>
<keyword id="KW-0810">Translation regulation</keyword>
<keyword id="KW-0820">tRNA-binding</keyword>
<protein>
    <recommendedName>
        <fullName evidence="1">Large ribosomal subunit protein uL1</fullName>
    </recommendedName>
    <alternativeName>
        <fullName evidence="2">50S ribosomal protein L1</fullName>
    </alternativeName>
</protein>
<gene>
    <name evidence="1" type="primary">rplA</name>
    <name evidence="1" type="synonym">rpl1</name>
    <name type="ordered locus">SynRCC307_2357</name>
</gene>
<name>RL1_SYNR3</name>
<reference key="1">
    <citation type="submission" date="2006-05" db="EMBL/GenBank/DDBJ databases">
        <authorList>
            <consortium name="Genoscope"/>
        </authorList>
    </citation>
    <scope>NUCLEOTIDE SEQUENCE [LARGE SCALE GENOMIC DNA]</scope>
    <source>
        <strain>RCC307</strain>
    </source>
</reference>
<comment type="function">
    <text evidence="1">Binds directly to 23S rRNA. The L1 stalk is quite mobile in the ribosome, and is involved in E site tRNA release.</text>
</comment>
<comment type="function">
    <text evidence="1">Protein L1 is also a translational repressor protein, it controls the translation of the L11 operon by binding to its mRNA.</text>
</comment>
<comment type="subunit">
    <text evidence="1">Part of the 50S ribosomal subunit.</text>
</comment>
<comment type="similarity">
    <text evidence="1">Belongs to the universal ribosomal protein uL1 family.</text>
</comment>
<evidence type="ECO:0000255" key="1">
    <source>
        <dbReference type="HAMAP-Rule" id="MF_01318"/>
    </source>
</evidence>
<evidence type="ECO:0000305" key="2"/>
<sequence>MKSISKRFKAAQATVEPRAYAPLEAVSLVKANATAKFDETIEAHVRLGIDPKYTDQQLRTTVALPKGTGRSIRIAVITRGEKVAEAKAAGAELVGDEELVDSIAGGQMDFDLLIATPDMMPKVAKLGRVLGPRGLMPNPKTGTVTTDVTNAINEFKAGKLEFRADRSGIVHVQFGKASFSADDLLENLKSVQETVDRNKPSGAKGRYWKSLYITSTMGPSVEVDFSALQDLSNAE</sequence>
<accession>A5GWK1</accession>